<protein>
    <recommendedName>
        <fullName evidence="3">Small ribosomal subunit protein eS4</fullName>
    </recommendedName>
    <alternativeName>
        <fullName>40S ribosomal protein S4, X isoform</fullName>
    </alternativeName>
</protein>
<keyword id="KW-0007">Acetylation</keyword>
<keyword id="KW-0963">Cytoplasm</keyword>
<keyword id="KW-1017">Isopeptide bond</keyword>
<keyword id="KW-0539">Nucleus</keyword>
<keyword id="KW-1185">Reference proteome</keyword>
<keyword id="KW-0687">Ribonucleoprotein</keyword>
<keyword id="KW-0689">Ribosomal protein</keyword>
<keyword id="KW-0694">RNA-binding</keyword>
<keyword id="KW-0699">rRNA-binding</keyword>
<keyword id="KW-0832">Ubl conjugation</keyword>
<feature type="initiator methionine" description="Removed" evidence="1">
    <location>
        <position position="1"/>
    </location>
</feature>
<feature type="chain" id="PRO_0000130804" description="Small ribosomal subunit protein eS4">
    <location>
        <begin position="2"/>
        <end position="263"/>
    </location>
</feature>
<feature type="domain" description="S4 RNA-binding">
    <location>
        <begin position="42"/>
        <end position="104"/>
    </location>
</feature>
<feature type="modified residue" description="N6-acetyllysine" evidence="2">
    <location>
        <position position="233"/>
    </location>
</feature>
<feature type="cross-link" description="Glycyl lysine isopeptide (Lys-Gly) (interchain with G-Cter in SUMO2)" evidence="1">
    <location>
        <position position="230"/>
    </location>
</feature>
<dbReference type="EMBL" id="U22232">
    <property type="protein sequence ID" value="AAB01670.1"/>
    <property type="molecule type" value="mRNA"/>
</dbReference>
<dbReference type="EMBL" id="D50106">
    <property type="protein sequence ID" value="BAA21077.1"/>
    <property type="molecule type" value="mRNA"/>
</dbReference>
<dbReference type="PIR" id="PC4159">
    <property type="entry name" value="PC4159"/>
</dbReference>
<dbReference type="RefSeq" id="XP_004000676.1">
    <property type="nucleotide sequence ID" value="XM_004000627.5"/>
</dbReference>
<dbReference type="SMR" id="P62705"/>
<dbReference type="IntAct" id="P62705">
    <property type="interactions" value="1"/>
</dbReference>
<dbReference type="STRING" id="9685.ENSFCAP00000057343"/>
<dbReference type="PaxDb" id="9685-ENSFCAP00000011170"/>
<dbReference type="Ensembl" id="ENSFCAT00000012043.6">
    <property type="protein sequence ID" value="ENSFCAP00000011170.3"/>
    <property type="gene ID" value="ENSFCAG00000024876.4"/>
</dbReference>
<dbReference type="GeneID" id="768275"/>
<dbReference type="KEGG" id="fca:768275"/>
<dbReference type="CTD" id="6191"/>
<dbReference type="eggNOG" id="KOG0378">
    <property type="taxonomic scope" value="Eukaryota"/>
</dbReference>
<dbReference type="GeneTree" id="ENSGT00940000163191"/>
<dbReference type="HOGENOM" id="CLU_060400_1_0_1"/>
<dbReference type="InParanoid" id="P62705"/>
<dbReference type="OrthoDB" id="1109245at2759"/>
<dbReference type="CD-CODE" id="B4774FF5">
    <property type="entry name" value="Nucleolus"/>
</dbReference>
<dbReference type="Proteomes" id="UP000011712">
    <property type="component" value="Chromosome X"/>
</dbReference>
<dbReference type="Bgee" id="ENSFCAG00000024876">
    <property type="expression patterns" value="Expressed in embryonic head and 10 other cell types or tissues"/>
</dbReference>
<dbReference type="GO" id="GO:0022627">
    <property type="term" value="C:cytosolic small ribosomal subunit"/>
    <property type="evidence" value="ECO:0000318"/>
    <property type="project" value="GO_Central"/>
</dbReference>
<dbReference type="GO" id="GO:0005730">
    <property type="term" value="C:nucleolus"/>
    <property type="evidence" value="ECO:0007669"/>
    <property type="project" value="UniProtKB-SubCell"/>
</dbReference>
<dbReference type="GO" id="GO:1990904">
    <property type="term" value="C:ribonucleoprotein complex"/>
    <property type="evidence" value="ECO:0000250"/>
    <property type="project" value="UniProtKB"/>
</dbReference>
<dbReference type="GO" id="GO:0005840">
    <property type="term" value="C:ribosome"/>
    <property type="evidence" value="ECO:0000250"/>
    <property type="project" value="UniProtKB"/>
</dbReference>
<dbReference type="GO" id="GO:0032040">
    <property type="term" value="C:small-subunit processome"/>
    <property type="evidence" value="ECO:0000250"/>
    <property type="project" value="UniProtKB"/>
</dbReference>
<dbReference type="GO" id="GO:0003723">
    <property type="term" value="F:RNA binding"/>
    <property type="evidence" value="ECO:0000318"/>
    <property type="project" value="GO_Central"/>
</dbReference>
<dbReference type="GO" id="GO:0019843">
    <property type="term" value="F:rRNA binding"/>
    <property type="evidence" value="ECO:0007669"/>
    <property type="project" value="UniProtKB-KW"/>
</dbReference>
<dbReference type="GO" id="GO:0003735">
    <property type="term" value="F:structural constituent of ribosome"/>
    <property type="evidence" value="ECO:0000318"/>
    <property type="project" value="GO_Central"/>
</dbReference>
<dbReference type="GO" id="GO:0042274">
    <property type="term" value="P:ribosomal small subunit biogenesis"/>
    <property type="evidence" value="ECO:0000250"/>
    <property type="project" value="UniProtKB"/>
</dbReference>
<dbReference type="GO" id="GO:0006412">
    <property type="term" value="P:translation"/>
    <property type="evidence" value="ECO:0000318"/>
    <property type="project" value="GO_Central"/>
</dbReference>
<dbReference type="CDD" id="cd06087">
    <property type="entry name" value="KOW_RPS4"/>
    <property type="match status" value="1"/>
</dbReference>
<dbReference type="CDD" id="cd00165">
    <property type="entry name" value="S4"/>
    <property type="match status" value="1"/>
</dbReference>
<dbReference type="FunFam" id="2.30.30.30:FF:000005">
    <property type="entry name" value="40S ribosomal protein S4"/>
    <property type="match status" value="1"/>
</dbReference>
<dbReference type="FunFam" id="2.40.50.740:FF:000001">
    <property type="entry name" value="40S ribosomal protein S4"/>
    <property type="match status" value="1"/>
</dbReference>
<dbReference type="FunFam" id="3.10.290.10:FF:000051">
    <property type="entry name" value="40S ribosomal protein S4, X isoform"/>
    <property type="match status" value="1"/>
</dbReference>
<dbReference type="Gene3D" id="2.30.30.30">
    <property type="match status" value="1"/>
</dbReference>
<dbReference type="Gene3D" id="2.40.50.740">
    <property type="match status" value="1"/>
</dbReference>
<dbReference type="Gene3D" id="3.10.290.10">
    <property type="entry name" value="RNA-binding S4 domain"/>
    <property type="match status" value="1"/>
</dbReference>
<dbReference type="HAMAP" id="MF_00485">
    <property type="entry name" value="Ribosomal_eS4"/>
    <property type="match status" value="1"/>
</dbReference>
<dbReference type="InterPro" id="IPR005824">
    <property type="entry name" value="KOW"/>
</dbReference>
<dbReference type="InterPro" id="IPR014722">
    <property type="entry name" value="Rib_uL2_dom2"/>
</dbReference>
<dbReference type="InterPro" id="IPR000876">
    <property type="entry name" value="Ribosomal_eS4"/>
</dbReference>
<dbReference type="InterPro" id="IPR032277">
    <property type="entry name" value="Ribosomal_eS4_C"/>
</dbReference>
<dbReference type="InterPro" id="IPR013845">
    <property type="entry name" value="Ribosomal_eS4_central_region"/>
</dbReference>
<dbReference type="InterPro" id="IPR038237">
    <property type="entry name" value="Ribosomal_eS4_central_sf"/>
</dbReference>
<dbReference type="InterPro" id="IPR041982">
    <property type="entry name" value="Ribosomal_eS4_KOW"/>
</dbReference>
<dbReference type="InterPro" id="IPR013843">
    <property type="entry name" value="Ribosomal_eS4_N"/>
</dbReference>
<dbReference type="InterPro" id="IPR018199">
    <property type="entry name" value="Ribosomal_eS4_N_CS"/>
</dbReference>
<dbReference type="InterPro" id="IPR002942">
    <property type="entry name" value="S4_RNA-bd"/>
</dbReference>
<dbReference type="InterPro" id="IPR036986">
    <property type="entry name" value="S4_RNA-bd_sf"/>
</dbReference>
<dbReference type="PANTHER" id="PTHR11581">
    <property type="entry name" value="30S/40S RIBOSOMAL PROTEIN S4"/>
    <property type="match status" value="1"/>
</dbReference>
<dbReference type="PANTHER" id="PTHR11581:SF0">
    <property type="entry name" value="SMALL RIBOSOMAL SUBUNIT PROTEIN ES4"/>
    <property type="match status" value="1"/>
</dbReference>
<dbReference type="Pfam" id="PF16121">
    <property type="entry name" value="40S_S4_C"/>
    <property type="match status" value="1"/>
</dbReference>
<dbReference type="Pfam" id="PF00467">
    <property type="entry name" value="KOW"/>
    <property type="match status" value="1"/>
</dbReference>
<dbReference type="Pfam" id="PF00900">
    <property type="entry name" value="Ribosomal_S4e"/>
    <property type="match status" value="1"/>
</dbReference>
<dbReference type="Pfam" id="PF08071">
    <property type="entry name" value="RS4NT"/>
    <property type="match status" value="1"/>
</dbReference>
<dbReference type="PIRSF" id="PIRSF002116">
    <property type="entry name" value="Ribosomal_S4"/>
    <property type="match status" value="1"/>
</dbReference>
<dbReference type="SMART" id="SM00363">
    <property type="entry name" value="S4"/>
    <property type="match status" value="1"/>
</dbReference>
<dbReference type="PROSITE" id="PS00528">
    <property type="entry name" value="RIBOSOMAL_S4E"/>
    <property type="match status" value="1"/>
</dbReference>
<dbReference type="PROSITE" id="PS50889">
    <property type="entry name" value="S4"/>
    <property type="match status" value="1"/>
</dbReference>
<sequence length="263" mass="29598">MARGPKKHLKRVAAPKHWMLDKLTGVFAPRPSTGPHKLRECLPLIIFLRNRLKYALTGDEVKKICMQRFIKIDGKVRTDITYPAGFMDVISIDKTGENFRLIYDTKGRFAVHRITPEEAKYKLCKVRKIFVGTKGIPHLVTHDARTIRYPDPLIKVNDTIQIDLETGKITDFIKFDTGNLCMVTGGANLGRIGVITNRERHPGSFDVVHVKDANGNSFATRLSNIFVIGKGNKPWISLPRGKGIRLTIAEERDKRLAAKQSSG</sequence>
<comment type="function">
    <text evidence="1">Component of the small ribosomal subunit. The ribosome is a large ribonucleoprotein complex responsible for the synthesis of proteins in the cell. Part of the small subunit (SSU) processome, first precursor of the small eukaryotic ribosomal subunit. During the assembly of the SSU processome in the nucleolus, many ribosome biogenesis factors, an RNA chaperone and ribosomal proteins associate with the nascent pre-rRNA and work in concert to generate RNA folding, modifications, rearrangements and cleavage as well as targeted degradation of pre-ribosomal RNA by the RNA exosome.</text>
</comment>
<comment type="subunit">
    <text evidence="1">Component of the small ribosomal subunit. Part of the small subunit (SSU) processome, composed of more than 70 proteins and the RNA chaperone small nucleolar RNA (snoRNA) U3. Identified in a IGF2BP1-dependent mRNP granule complex containing untranslated mRNAs.</text>
</comment>
<comment type="subcellular location">
    <subcellularLocation>
        <location evidence="1">Cytoplasm</location>
    </subcellularLocation>
    <subcellularLocation>
        <location evidence="1">Nucleus</location>
        <location evidence="1">Nucleolus</location>
    </subcellularLocation>
    <text evidence="1">Localized in cytoplasmic mRNP granules containing untranslated mRNAs.</text>
</comment>
<comment type="similarity">
    <text evidence="3">Belongs to the eukaryotic ribosomal protein eS4 family.</text>
</comment>
<evidence type="ECO:0000250" key="1">
    <source>
        <dbReference type="UniProtKB" id="P62701"/>
    </source>
</evidence>
<evidence type="ECO:0000250" key="2">
    <source>
        <dbReference type="UniProtKB" id="P62702"/>
    </source>
</evidence>
<evidence type="ECO:0000305" key="3"/>
<reference key="1">
    <citation type="journal article" date="1996" name="Biochem. Biophys. Res. Commun.">
        <title>Primary sequence and evolutionary conservation of ribosomal protein genes from the domestic cat.</title>
        <authorList>
            <person name="Starkey C.R."/>
            <person name="Menon R.P."/>
            <person name="Prabhu S."/>
            <person name="Levy L.S."/>
        </authorList>
    </citation>
    <scope>NUCLEOTIDE SEQUENCE [MRNA]</scope>
    <source>
        <tissue>Thymic lymphoma</tissue>
    </source>
</reference>
<reference key="2">
    <citation type="journal article" date="1996" name="Genomics">
        <title>Relationship between the monosomy X phenotype and Y-linked ribosomal protein S4 (Rps4) in several species of mammals: a molecular evolutionary analysis of Rps4 homologs.</title>
        <authorList>
            <person name="Omoe K."/>
            <person name="Endo A."/>
        </authorList>
    </citation>
    <scope>NUCLEOTIDE SEQUENCE [MRNA] OF 20-213</scope>
    <source>
        <tissue>Blood</tissue>
    </source>
</reference>
<accession>P62705</accession>
<accession>P12631</accession>
<accession>P12750</accession>
<accession>P27576</accession>
<accession>P55831</accession>
<accession>Q14727</accession>
<proteinExistence type="evidence at transcript level"/>
<name>RS4X_FELCA</name>
<organism>
    <name type="scientific">Felis catus</name>
    <name type="common">Cat</name>
    <name type="synonym">Felis silvestris catus</name>
    <dbReference type="NCBI Taxonomy" id="9685"/>
    <lineage>
        <taxon>Eukaryota</taxon>
        <taxon>Metazoa</taxon>
        <taxon>Chordata</taxon>
        <taxon>Craniata</taxon>
        <taxon>Vertebrata</taxon>
        <taxon>Euteleostomi</taxon>
        <taxon>Mammalia</taxon>
        <taxon>Eutheria</taxon>
        <taxon>Laurasiatheria</taxon>
        <taxon>Carnivora</taxon>
        <taxon>Feliformia</taxon>
        <taxon>Felidae</taxon>
        <taxon>Felinae</taxon>
        <taxon>Felis</taxon>
    </lineage>
</organism>
<gene>
    <name type="primary">RPS4X</name>
    <name type="synonym">RPS4</name>
</gene>